<organism>
    <name type="scientific">Acidithiobacillus ferrooxidans (strain ATCC 53993 / BNL-5-31)</name>
    <name type="common">Leptospirillum ferrooxidans (ATCC 53993)</name>
    <dbReference type="NCBI Taxonomy" id="380394"/>
    <lineage>
        <taxon>Bacteria</taxon>
        <taxon>Pseudomonadati</taxon>
        <taxon>Pseudomonadota</taxon>
        <taxon>Acidithiobacillia</taxon>
        <taxon>Acidithiobacillales</taxon>
        <taxon>Acidithiobacillaceae</taxon>
        <taxon>Acidithiobacillus</taxon>
    </lineage>
</organism>
<accession>B5EQL7</accession>
<name>ACPS_ACIF5</name>
<feature type="chain" id="PRO_1000093850" description="Holo-[acyl-carrier-protein] synthase">
    <location>
        <begin position="1"/>
        <end position="129"/>
    </location>
</feature>
<feature type="binding site" evidence="1">
    <location>
        <position position="8"/>
    </location>
    <ligand>
        <name>Mg(2+)</name>
        <dbReference type="ChEBI" id="CHEBI:18420"/>
    </ligand>
</feature>
<feature type="binding site" evidence="1">
    <location>
        <position position="58"/>
    </location>
    <ligand>
        <name>Mg(2+)</name>
        <dbReference type="ChEBI" id="CHEBI:18420"/>
    </ligand>
</feature>
<keyword id="KW-0963">Cytoplasm</keyword>
<keyword id="KW-0275">Fatty acid biosynthesis</keyword>
<keyword id="KW-0276">Fatty acid metabolism</keyword>
<keyword id="KW-0444">Lipid biosynthesis</keyword>
<keyword id="KW-0443">Lipid metabolism</keyword>
<keyword id="KW-0460">Magnesium</keyword>
<keyword id="KW-0479">Metal-binding</keyword>
<keyword id="KW-0808">Transferase</keyword>
<comment type="function">
    <text evidence="1">Transfers the 4'-phosphopantetheine moiety from coenzyme A to a Ser of acyl-carrier-protein.</text>
</comment>
<comment type="catalytic activity">
    <reaction evidence="1">
        <text>apo-[ACP] + CoA = holo-[ACP] + adenosine 3',5'-bisphosphate + H(+)</text>
        <dbReference type="Rhea" id="RHEA:12068"/>
        <dbReference type="Rhea" id="RHEA-COMP:9685"/>
        <dbReference type="Rhea" id="RHEA-COMP:9690"/>
        <dbReference type="ChEBI" id="CHEBI:15378"/>
        <dbReference type="ChEBI" id="CHEBI:29999"/>
        <dbReference type="ChEBI" id="CHEBI:57287"/>
        <dbReference type="ChEBI" id="CHEBI:58343"/>
        <dbReference type="ChEBI" id="CHEBI:64479"/>
        <dbReference type="EC" id="2.7.8.7"/>
    </reaction>
</comment>
<comment type="cofactor">
    <cofactor evidence="1">
        <name>Mg(2+)</name>
        <dbReference type="ChEBI" id="CHEBI:18420"/>
    </cofactor>
</comment>
<comment type="subcellular location">
    <subcellularLocation>
        <location evidence="1">Cytoplasm</location>
    </subcellularLocation>
</comment>
<comment type="similarity">
    <text evidence="1">Belongs to the P-Pant transferase superfamily. AcpS family.</text>
</comment>
<proteinExistence type="inferred from homology"/>
<evidence type="ECO:0000255" key="1">
    <source>
        <dbReference type="HAMAP-Rule" id="MF_00101"/>
    </source>
</evidence>
<gene>
    <name evidence="1" type="primary">acpS</name>
    <name type="ordered locus">Lferr_1125</name>
</gene>
<protein>
    <recommendedName>
        <fullName evidence="1">Holo-[acyl-carrier-protein] synthase</fullName>
        <shortName evidence="1">Holo-ACP synthase</shortName>
        <ecNumber evidence="1">2.7.8.7</ecNumber>
    </recommendedName>
    <alternativeName>
        <fullName evidence="1">4'-phosphopantetheinyl transferase AcpS</fullName>
    </alternativeName>
</protein>
<dbReference type="EC" id="2.7.8.7" evidence="1"/>
<dbReference type="EMBL" id="CP001132">
    <property type="protein sequence ID" value="ACH83367.1"/>
    <property type="molecule type" value="Genomic_DNA"/>
</dbReference>
<dbReference type="RefSeq" id="WP_009565421.1">
    <property type="nucleotide sequence ID" value="NC_011206.1"/>
</dbReference>
<dbReference type="SMR" id="B5EQL7"/>
<dbReference type="GeneID" id="65280635"/>
<dbReference type="KEGG" id="afe:Lferr_1125"/>
<dbReference type="eggNOG" id="COG0736">
    <property type="taxonomic scope" value="Bacteria"/>
</dbReference>
<dbReference type="HOGENOM" id="CLU_089696_3_1_6"/>
<dbReference type="GO" id="GO:0005737">
    <property type="term" value="C:cytoplasm"/>
    <property type="evidence" value="ECO:0007669"/>
    <property type="project" value="UniProtKB-SubCell"/>
</dbReference>
<dbReference type="GO" id="GO:0008897">
    <property type="term" value="F:holo-[acyl-carrier-protein] synthase activity"/>
    <property type="evidence" value="ECO:0007669"/>
    <property type="project" value="UniProtKB-UniRule"/>
</dbReference>
<dbReference type="GO" id="GO:0000287">
    <property type="term" value="F:magnesium ion binding"/>
    <property type="evidence" value="ECO:0007669"/>
    <property type="project" value="UniProtKB-UniRule"/>
</dbReference>
<dbReference type="GO" id="GO:0006633">
    <property type="term" value="P:fatty acid biosynthetic process"/>
    <property type="evidence" value="ECO:0007669"/>
    <property type="project" value="UniProtKB-UniRule"/>
</dbReference>
<dbReference type="Gene3D" id="3.90.470.20">
    <property type="entry name" value="4'-phosphopantetheinyl transferase domain"/>
    <property type="match status" value="1"/>
</dbReference>
<dbReference type="HAMAP" id="MF_00101">
    <property type="entry name" value="AcpS"/>
    <property type="match status" value="1"/>
</dbReference>
<dbReference type="InterPro" id="IPR008278">
    <property type="entry name" value="4-PPantetheinyl_Trfase_dom"/>
</dbReference>
<dbReference type="InterPro" id="IPR037143">
    <property type="entry name" value="4-PPantetheinyl_Trfase_dom_sf"/>
</dbReference>
<dbReference type="InterPro" id="IPR002582">
    <property type="entry name" value="ACPS"/>
</dbReference>
<dbReference type="InterPro" id="IPR004568">
    <property type="entry name" value="Ppantetheine-prot_Trfase_dom"/>
</dbReference>
<dbReference type="NCBIfam" id="TIGR00516">
    <property type="entry name" value="acpS"/>
    <property type="match status" value="1"/>
</dbReference>
<dbReference type="NCBIfam" id="TIGR00556">
    <property type="entry name" value="pantethn_trn"/>
    <property type="match status" value="1"/>
</dbReference>
<dbReference type="Pfam" id="PF01648">
    <property type="entry name" value="ACPS"/>
    <property type="match status" value="1"/>
</dbReference>
<dbReference type="SUPFAM" id="SSF56214">
    <property type="entry name" value="4'-phosphopantetheinyl transferase"/>
    <property type="match status" value="1"/>
</dbReference>
<sequence>MIVGMGTDIVAVERMARLHARFGERLTERLLGPLEVADMPVEAAAGAAFLARRFAAKEATFKALGSGMTNGMRWMDVQVGHDSGGRPQLVLGGRAQQLLRGLGDGVRSWLSISDERRYAMAVVVLERGG</sequence>
<reference key="1">
    <citation type="submission" date="2008-08" db="EMBL/GenBank/DDBJ databases">
        <title>Complete sequence of Acidithiobacillus ferrooxidans ATCC 53993.</title>
        <authorList>
            <person name="Lucas S."/>
            <person name="Copeland A."/>
            <person name="Lapidus A."/>
            <person name="Glavina del Rio T."/>
            <person name="Dalin E."/>
            <person name="Tice H."/>
            <person name="Bruce D."/>
            <person name="Goodwin L."/>
            <person name="Pitluck S."/>
            <person name="Sims D."/>
            <person name="Brettin T."/>
            <person name="Detter J.C."/>
            <person name="Han C."/>
            <person name="Kuske C.R."/>
            <person name="Larimer F."/>
            <person name="Land M."/>
            <person name="Hauser L."/>
            <person name="Kyrpides N."/>
            <person name="Lykidis A."/>
            <person name="Borole A.P."/>
        </authorList>
    </citation>
    <scope>NUCLEOTIDE SEQUENCE [LARGE SCALE GENOMIC DNA]</scope>
    <source>
        <strain>ATCC 53993 / BNL-5-31</strain>
    </source>
</reference>